<comment type="function">
    <text evidence="1">Catalyzes a trans-dehydration via an enolate intermediate.</text>
</comment>
<comment type="catalytic activity">
    <reaction evidence="1">
        <text>3-dehydroquinate = 3-dehydroshikimate + H2O</text>
        <dbReference type="Rhea" id="RHEA:21096"/>
        <dbReference type="ChEBI" id="CHEBI:15377"/>
        <dbReference type="ChEBI" id="CHEBI:16630"/>
        <dbReference type="ChEBI" id="CHEBI:32364"/>
        <dbReference type="EC" id="4.2.1.10"/>
    </reaction>
</comment>
<comment type="pathway">
    <text evidence="1">Metabolic intermediate biosynthesis; chorismate biosynthesis; chorismate from D-erythrose 4-phosphate and phosphoenolpyruvate: step 3/7.</text>
</comment>
<comment type="subunit">
    <text evidence="1">Homododecamer.</text>
</comment>
<comment type="similarity">
    <text evidence="1">Belongs to the type-II 3-dehydroquinase family.</text>
</comment>
<sequence length="158" mass="17086">MKILVIQGPNLNILGHREPHIYGNFTLDQIHNNLQAQAKQNNAELEFFQSNFEGEIIDKLQECIGGEYAGVLINPAAFSHTSIAIADAIASCGVPVIEVHISNIHAREEYRSKSYTGAVSAGVITGFGAFGYHLALMGILQIANEIAALKAQQNNQNA</sequence>
<name>AROQ_HELHP</name>
<feature type="chain" id="PRO_0000159904" description="3-dehydroquinate dehydratase">
    <location>
        <begin position="1"/>
        <end position="158"/>
    </location>
</feature>
<feature type="active site" description="Proton acceptor" evidence="1">
    <location>
        <position position="22"/>
    </location>
</feature>
<feature type="active site" description="Proton donor" evidence="1">
    <location>
        <position position="100"/>
    </location>
</feature>
<feature type="binding site" evidence="1">
    <location>
        <position position="74"/>
    </location>
    <ligand>
        <name>substrate</name>
    </ligand>
</feature>
<feature type="binding site" evidence="1">
    <location>
        <position position="80"/>
    </location>
    <ligand>
        <name>substrate</name>
    </ligand>
</feature>
<feature type="binding site" evidence="1">
    <location>
        <position position="87"/>
    </location>
    <ligand>
        <name>substrate</name>
    </ligand>
</feature>
<feature type="binding site" evidence="1">
    <location>
        <begin position="101"/>
        <end position="102"/>
    </location>
    <ligand>
        <name>substrate</name>
    </ligand>
</feature>
<feature type="binding site" evidence="1">
    <location>
        <position position="111"/>
    </location>
    <ligand>
        <name>substrate</name>
    </ligand>
</feature>
<feature type="site" description="Transition state stabilizer" evidence="1">
    <location>
        <position position="17"/>
    </location>
</feature>
<proteinExistence type="inferred from homology"/>
<accession>Q7VHM1</accession>
<reference key="1">
    <citation type="journal article" date="2003" name="Proc. Natl. Acad. Sci. U.S.A.">
        <title>The complete genome sequence of the carcinogenic bacterium Helicobacter hepaticus.</title>
        <authorList>
            <person name="Suerbaum S."/>
            <person name="Josenhans C."/>
            <person name="Sterzenbach T."/>
            <person name="Drescher B."/>
            <person name="Brandt P."/>
            <person name="Bell M."/>
            <person name="Droege M."/>
            <person name="Fartmann B."/>
            <person name="Fischer H.-P."/>
            <person name="Ge Z."/>
            <person name="Hoerster A."/>
            <person name="Holland R."/>
            <person name="Klein K."/>
            <person name="Koenig J."/>
            <person name="Macko L."/>
            <person name="Mendz G.L."/>
            <person name="Nyakatura G."/>
            <person name="Schauer D.B."/>
            <person name="Shen Z."/>
            <person name="Weber J."/>
            <person name="Frosch M."/>
            <person name="Fox J.G."/>
        </authorList>
    </citation>
    <scope>NUCLEOTIDE SEQUENCE [LARGE SCALE GENOMIC DNA]</scope>
    <source>
        <strain>ATCC 51449 / 3B1</strain>
    </source>
</reference>
<keyword id="KW-0028">Amino-acid biosynthesis</keyword>
<keyword id="KW-0057">Aromatic amino acid biosynthesis</keyword>
<keyword id="KW-0456">Lyase</keyword>
<keyword id="KW-1185">Reference proteome</keyword>
<evidence type="ECO:0000255" key="1">
    <source>
        <dbReference type="HAMAP-Rule" id="MF_00169"/>
    </source>
</evidence>
<organism>
    <name type="scientific">Helicobacter hepaticus (strain ATCC 51449 / 3B1)</name>
    <dbReference type="NCBI Taxonomy" id="235279"/>
    <lineage>
        <taxon>Bacteria</taxon>
        <taxon>Pseudomonadati</taxon>
        <taxon>Campylobacterota</taxon>
        <taxon>Epsilonproteobacteria</taxon>
        <taxon>Campylobacterales</taxon>
        <taxon>Helicobacteraceae</taxon>
        <taxon>Helicobacter</taxon>
    </lineage>
</organism>
<protein>
    <recommendedName>
        <fullName evidence="1">3-dehydroquinate dehydratase</fullName>
        <shortName evidence="1">3-dehydroquinase</shortName>
        <ecNumber evidence="1">4.2.1.10</ecNumber>
    </recommendedName>
    <alternativeName>
        <fullName evidence="1">Type II DHQase</fullName>
    </alternativeName>
</protein>
<gene>
    <name evidence="1" type="primary">aroQ</name>
    <name type="ordered locus">HH_0945</name>
</gene>
<dbReference type="EC" id="4.2.1.10" evidence="1"/>
<dbReference type="EMBL" id="AE017125">
    <property type="protein sequence ID" value="AAP77542.1"/>
    <property type="molecule type" value="Genomic_DNA"/>
</dbReference>
<dbReference type="RefSeq" id="WP_011115785.1">
    <property type="nucleotide sequence ID" value="NC_004917.1"/>
</dbReference>
<dbReference type="SMR" id="Q7VHM1"/>
<dbReference type="STRING" id="235279.HH_0945"/>
<dbReference type="KEGG" id="hhe:HH_0945"/>
<dbReference type="eggNOG" id="COG0757">
    <property type="taxonomic scope" value="Bacteria"/>
</dbReference>
<dbReference type="HOGENOM" id="CLU_090968_3_0_7"/>
<dbReference type="OrthoDB" id="9790793at2"/>
<dbReference type="UniPathway" id="UPA00053">
    <property type="reaction ID" value="UER00086"/>
</dbReference>
<dbReference type="Proteomes" id="UP000002495">
    <property type="component" value="Chromosome"/>
</dbReference>
<dbReference type="GO" id="GO:0003855">
    <property type="term" value="F:3-dehydroquinate dehydratase activity"/>
    <property type="evidence" value="ECO:0007669"/>
    <property type="project" value="UniProtKB-UniRule"/>
</dbReference>
<dbReference type="GO" id="GO:0008652">
    <property type="term" value="P:amino acid biosynthetic process"/>
    <property type="evidence" value="ECO:0007669"/>
    <property type="project" value="UniProtKB-KW"/>
</dbReference>
<dbReference type="GO" id="GO:0009073">
    <property type="term" value="P:aromatic amino acid family biosynthetic process"/>
    <property type="evidence" value="ECO:0007669"/>
    <property type="project" value="UniProtKB-KW"/>
</dbReference>
<dbReference type="GO" id="GO:0009423">
    <property type="term" value="P:chorismate biosynthetic process"/>
    <property type="evidence" value="ECO:0007669"/>
    <property type="project" value="UniProtKB-UniRule"/>
</dbReference>
<dbReference type="GO" id="GO:0019631">
    <property type="term" value="P:quinate catabolic process"/>
    <property type="evidence" value="ECO:0007669"/>
    <property type="project" value="TreeGrafter"/>
</dbReference>
<dbReference type="CDD" id="cd00466">
    <property type="entry name" value="DHQase_II"/>
    <property type="match status" value="1"/>
</dbReference>
<dbReference type="Gene3D" id="3.40.50.9100">
    <property type="entry name" value="Dehydroquinase, class II"/>
    <property type="match status" value="1"/>
</dbReference>
<dbReference type="HAMAP" id="MF_00169">
    <property type="entry name" value="AroQ"/>
    <property type="match status" value="1"/>
</dbReference>
<dbReference type="InterPro" id="IPR001874">
    <property type="entry name" value="DHquinase_II"/>
</dbReference>
<dbReference type="InterPro" id="IPR018509">
    <property type="entry name" value="DHquinase_II_CS"/>
</dbReference>
<dbReference type="InterPro" id="IPR036441">
    <property type="entry name" value="DHquinase_II_sf"/>
</dbReference>
<dbReference type="NCBIfam" id="TIGR01088">
    <property type="entry name" value="aroQ"/>
    <property type="match status" value="1"/>
</dbReference>
<dbReference type="NCBIfam" id="NF003805">
    <property type="entry name" value="PRK05395.1-2"/>
    <property type="match status" value="1"/>
</dbReference>
<dbReference type="NCBIfam" id="NF003806">
    <property type="entry name" value="PRK05395.1-3"/>
    <property type="match status" value="1"/>
</dbReference>
<dbReference type="NCBIfam" id="NF003807">
    <property type="entry name" value="PRK05395.1-4"/>
    <property type="match status" value="1"/>
</dbReference>
<dbReference type="PANTHER" id="PTHR21272">
    <property type="entry name" value="CATABOLIC 3-DEHYDROQUINASE"/>
    <property type="match status" value="1"/>
</dbReference>
<dbReference type="PANTHER" id="PTHR21272:SF3">
    <property type="entry name" value="CATABOLIC 3-DEHYDROQUINASE"/>
    <property type="match status" value="1"/>
</dbReference>
<dbReference type="Pfam" id="PF01220">
    <property type="entry name" value="DHquinase_II"/>
    <property type="match status" value="1"/>
</dbReference>
<dbReference type="PIRSF" id="PIRSF001399">
    <property type="entry name" value="DHquinase_II"/>
    <property type="match status" value="1"/>
</dbReference>
<dbReference type="SUPFAM" id="SSF52304">
    <property type="entry name" value="Type II 3-dehydroquinate dehydratase"/>
    <property type="match status" value="1"/>
</dbReference>
<dbReference type="PROSITE" id="PS01029">
    <property type="entry name" value="DEHYDROQUINASE_II"/>
    <property type="match status" value="1"/>
</dbReference>